<proteinExistence type="inferred from homology"/>
<evidence type="ECO:0000255" key="1">
    <source>
        <dbReference type="HAMAP-Rule" id="MF_00402"/>
    </source>
</evidence>
<evidence type="ECO:0000305" key="2"/>
<accession>Q87F53</accession>
<keyword id="KW-1185">Reference proteome</keyword>
<keyword id="KW-0687">Ribonucleoprotein</keyword>
<keyword id="KW-0689">Ribosomal protein</keyword>
<reference key="1">
    <citation type="journal article" date="2003" name="J. Bacteriol.">
        <title>Comparative analyses of the complete genome sequences of Pierce's disease and citrus variegated chlorosis strains of Xylella fastidiosa.</title>
        <authorList>
            <person name="Van Sluys M.A."/>
            <person name="de Oliveira M.C."/>
            <person name="Monteiro-Vitorello C.B."/>
            <person name="Miyaki C.Y."/>
            <person name="Furlan L.R."/>
            <person name="Camargo L.E.A."/>
            <person name="da Silva A.C.R."/>
            <person name="Moon D.H."/>
            <person name="Takita M.A."/>
            <person name="Lemos E.G.M."/>
            <person name="Machado M.A."/>
            <person name="Ferro M.I.T."/>
            <person name="da Silva F.R."/>
            <person name="Goldman M.H.S."/>
            <person name="Goldman G.H."/>
            <person name="Lemos M.V.F."/>
            <person name="El-Dorry H."/>
            <person name="Tsai S.M."/>
            <person name="Carrer H."/>
            <person name="Carraro D.M."/>
            <person name="de Oliveira R.C."/>
            <person name="Nunes L.R."/>
            <person name="Siqueira W.J."/>
            <person name="Coutinho L.L."/>
            <person name="Kimura E.T."/>
            <person name="Ferro E.S."/>
            <person name="Harakava R."/>
            <person name="Kuramae E.E."/>
            <person name="Marino C.L."/>
            <person name="Giglioti E."/>
            <person name="Abreu I.L."/>
            <person name="Alves L.M.C."/>
            <person name="do Amaral A.M."/>
            <person name="Baia G.S."/>
            <person name="Blanco S.R."/>
            <person name="Brito M.S."/>
            <person name="Cannavan F.S."/>
            <person name="Celestino A.V."/>
            <person name="da Cunha A.F."/>
            <person name="Fenille R.C."/>
            <person name="Ferro J.A."/>
            <person name="Formighieri E.F."/>
            <person name="Kishi L.T."/>
            <person name="Leoni S.G."/>
            <person name="Oliveira A.R."/>
            <person name="Rosa V.E. Jr."/>
            <person name="Sassaki F.T."/>
            <person name="Sena J.A.D."/>
            <person name="de Souza A.A."/>
            <person name="Truffi D."/>
            <person name="Tsukumo F."/>
            <person name="Yanai G.M."/>
            <person name="Zaros L.G."/>
            <person name="Civerolo E.L."/>
            <person name="Simpson A.J.G."/>
            <person name="Almeida N.F. Jr."/>
            <person name="Setubal J.C."/>
            <person name="Kitajima J.P."/>
        </authorList>
    </citation>
    <scope>NUCLEOTIDE SEQUENCE [LARGE SCALE GENOMIC DNA]</scope>
    <source>
        <strain>Temecula1 / ATCC 700964</strain>
    </source>
</reference>
<protein>
    <recommendedName>
        <fullName evidence="1">Large ribosomal subunit protein bL19</fullName>
    </recommendedName>
    <alternativeName>
        <fullName evidence="2">50S ribosomal protein L19</fullName>
    </alternativeName>
</protein>
<name>RL19_XYLFT</name>
<gene>
    <name evidence="1" type="primary">rplS</name>
    <name type="ordered locus">PD_0084</name>
</gene>
<organism>
    <name type="scientific">Xylella fastidiosa (strain Temecula1 / ATCC 700964)</name>
    <dbReference type="NCBI Taxonomy" id="183190"/>
    <lineage>
        <taxon>Bacteria</taxon>
        <taxon>Pseudomonadati</taxon>
        <taxon>Pseudomonadota</taxon>
        <taxon>Gammaproteobacteria</taxon>
        <taxon>Lysobacterales</taxon>
        <taxon>Lysobacteraceae</taxon>
        <taxon>Xylella</taxon>
    </lineage>
</organism>
<dbReference type="EMBL" id="AE009442">
    <property type="protein sequence ID" value="AAO27984.1"/>
    <property type="molecule type" value="Genomic_DNA"/>
</dbReference>
<dbReference type="RefSeq" id="WP_004085540.1">
    <property type="nucleotide sequence ID" value="NC_004556.1"/>
</dbReference>
<dbReference type="SMR" id="Q87F53"/>
<dbReference type="GeneID" id="93903775"/>
<dbReference type="KEGG" id="xft:PD_0084"/>
<dbReference type="HOGENOM" id="CLU_103507_2_1_6"/>
<dbReference type="Proteomes" id="UP000002516">
    <property type="component" value="Chromosome"/>
</dbReference>
<dbReference type="GO" id="GO:0022625">
    <property type="term" value="C:cytosolic large ribosomal subunit"/>
    <property type="evidence" value="ECO:0007669"/>
    <property type="project" value="TreeGrafter"/>
</dbReference>
<dbReference type="GO" id="GO:0003735">
    <property type="term" value="F:structural constituent of ribosome"/>
    <property type="evidence" value="ECO:0007669"/>
    <property type="project" value="InterPro"/>
</dbReference>
<dbReference type="GO" id="GO:0006412">
    <property type="term" value="P:translation"/>
    <property type="evidence" value="ECO:0007669"/>
    <property type="project" value="UniProtKB-UniRule"/>
</dbReference>
<dbReference type="FunFam" id="2.30.30.790:FF:000001">
    <property type="entry name" value="50S ribosomal protein L19"/>
    <property type="match status" value="1"/>
</dbReference>
<dbReference type="Gene3D" id="2.30.30.790">
    <property type="match status" value="1"/>
</dbReference>
<dbReference type="HAMAP" id="MF_00402">
    <property type="entry name" value="Ribosomal_bL19"/>
    <property type="match status" value="1"/>
</dbReference>
<dbReference type="InterPro" id="IPR001857">
    <property type="entry name" value="Ribosomal_bL19"/>
</dbReference>
<dbReference type="InterPro" id="IPR018257">
    <property type="entry name" value="Ribosomal_bL19_CS"/>
</dbReference>
<dbReference type="InterPro" id="IPR038657">
    <property type="entry name" value="Ribosomal_bL19_sf"/>
</dbReference>
<dbReference type="InterPro" id="IPR008991">
    <property type="entry name" value="Translation_prot_SH3-like_sf"/>
</dbReference>
<dbReference type="NCBIfam" id="TIGR01024">
    <property type="entry name" value="rplS_bact"/>
    <property type="match status" value="1"/>
</dbReference>
<dbReference type="PANTHER" id="PTHR15680:SF9">
    <property type="entry name" value="LARGE RIBOSOMAL SUBUNIT PROTEIN BL19M"/>
    <property type="match status" value="1"/>
</dbReference>
<dbReference type="PANTHER" id="PTHR15680">
    <property type="entry name" value="RIBOSOMAL PROTEIN L19"/>
    <property type="match status" value="1"/>
</dbReference>
<dbReference type="Pfam" id="PF01245">
    <property type="entry name" value="Ribosomal_L19"/>
    <property type="match status" value="1"/>
</dbReference>
<dbReference type="PIRSF" id="PIRSF002191">
    <property type="entry name" value="Ribosomal_L19"/>
    <property type="match status" value="1"/>
</dbReference>
<dbReference type="PRINTS" id="PR00061">
    <property type="entry name" value="RIBOSOMALL19"/>
</dbReference>
<dbReference type="SUPFAM" id="SSF50104">
    <property type="entry name" value="Translation proteins SH3-like domain"/>
    <property type="match status" value="1"/>
</dbReference>
<dbReference type="PROSITE" id="PS01015">
    <property type="entry name" value="RIBOSOMAL_L19"/>
    <property type="match status" value="1"/>
</dbReference>
<sequence>MSKLNKSIIAEFESAQITRQVPQFSQGDTIVVNVKVKEGNRERLQAYEGVVIATKNAGLNSAFTVRKISHGYGVERVFQTHSPIIESIEIKRRGKVRAAKLYYLRGLEGKAARIKEDLAATAHEKLARKTVTAKAG</sequence>
<comment type="function">
    <text evidence="1">This protein is located at the 30S-50S ribosomal subunit interface and may play a role in the structure and function of the aminoacyl-tRNA binding site.</text>
</comment>
<comment type="similarity">
    <text evidence="1">Belongs to the bacterial ribosomal protein bL19 family.</text>
</comment>
<feature type="chain" id="PRO_0000163575" description="Large ribosomal subunit protein bL19">
    <location>
        <begin position="1"/>
        <end position="136"/>
    </location>
</feature>